<feature type="chain" id="PRO_0000220171" description="Alkanal monooxygenase alpha chain">
    <location>
        <begin position="1"/>
        <end position="354"/>
    </location>
</feature>
<organism>
    <name type="scientific">Aliivibrio fischeri</name>
    <name type="common">Vibrio fischeri</name>
    <dbReference type="NCBI Taxonomy" id="668"/>
    <lineage>
        <taxon>Bacteria</taxon>
        <taxon>Pseudomonadati</taxon>
        <taxon>Pseudomonadota</taxon>
        <taxon>Gammaproteobacteria</taxon>
        <taxon>Vibrionales</taxon>
        <taxon>Vibrionaceae</taxon>
        <taxon>Aliivibrio</taxon>
    </lineage>
</organism>
<comment type="function">
    <text evidence="2">Light-emitting reaction in luminous bacteria.</text>
</comment>
<comment type="catalytic activity">
    <reaction evidence="2">
        <text>a long-chain fatty aldehyde + FMNH2 + O2 = a long-chain fatty acid + hnu + FMN + H2O + 2 H(+)</text>
        <dbReference type="Rhea" id="RHEA:17181"/>
        <dbReference type="ChEBI" id="CHEBI:15377"/>
        <dbReference type="ChEBI" id="CHEBI:15378"/>
        <dbReference type="ChEBI" id="CHEBI:15379"/>
        <dbReference type="ChEBI" id="CHEBI:17176"/>
        <dbReference type="ChEBI" id="CHEBI:30212"/>
        <dbReference type="ChEBI" id="CHEBI:57560"/>
        <dbReference type="ChEBI" id="CHEBI:57618"/>
        <dbReference type="ChEBI" id="CHEBI:58210"/>
        <dbReference type="EC" id="1.14.14.3"/>
    </reaction>
</comment>
<comment type="subunit">
    <text evidence="1">Heterodimer of an alpha and a beta chain.</text>
</comment>
<comment type="similarity">
    <text evidence="3">Belongs to the bacterial luciferase oxidoreductase family.</text>
</comment>
<keyword id="KW-0285">Flavoprotein</keyword>
<keyword id="KW-0288">FMN</keyword>
<keyword id="KW-0455">Luminescence</keyword>
<keyword id="KW-0503">Monooxygenase</keyword>
<keyword id="KW-0560">Oxidoreductase</keyword>
<keyword id="KW-0599">Photoprotein</keyword>
<dbReference type="EC" id="1.14.14.3" evidence="2"/>
<dbReference type="EMBL" id="X06758">
    <property type="protein sequence ID" value="CAA29931.1"/>
    <property type="molecule type" value="Genomic_DNA"/>
</dbReference>
<dbReference type="EMBL" id="U55385">
    <property type="protein sequence ID" value="AAB00442.1"/>
    <property type="molecule type" value="Genomic_DNA"/>
</dbReference>
<dbReference type="EMBL" id="U55819">
    <property type="protein sequence ID" value="AAB00449.1"/>
    <property type="molecule type" value="Genomic_DNA"/>
</dbReference>
<dbReference type="PIR" id="S00574">
    <property type="entry name" value="S00574"/>
</dbReference>
<dbReference type="SMR" id="P19907"/>
<dbReference type="BioCyc" id="MetaCyc:LUXAVIBFI-MONOMER"/>
<dbReference type="BRENDA" id="1.14.14.3">
    <property type="organism ID" value="71"/>
</dbReference>
<dbReference type="GO" id="GO:0005829">
    <property type="term" value="C:cytosol"/>
    <property type="evidence" value="ECO:0007669"/>
    <property type="project" value="TreeGrafter"/>
</dbReference>
<dbReference type="GO" id="GO:0047646">
    <property type="term" value="F:alkanal monooxygenase (FMN-linked) activity"/>
    <property type="evidence" value="ECO:0007669"/>
    <property type="project" value="UniProtKB-EC"/>
</dbReference>
<dbReference type="GO" id="GO:0008218">
    <property type="term" value="P:bioluminescence"/>
    <property type="evidence" value="ECO:0000315"/>
    <property type="project" value="CACAO"/>
</dbReference>
<dbReference type="GO" id="GO:0052008">
    <property type="term" value="P:symbiont-mediated disruption of host cellular anatomical structure"/>
    <property type="evidence" value="ECO:0000315"/>
    <property type="project" value="CACAO"/>
</dbReference>
<dbReference type="CDD" id="cd01096">
    <property type="entry name" value="Alkanal_monooxygenase"/>
    <property type="match status" value="1"/>
</dbReference>
<dbReference type="Gene3D" id="3.20.20.30">
    <property type="entry name" value="Luciferase-like domain"/>
    <property type="match status" value="1"/>
</dbReference>
<dbReference type="InterPro" id="IPR033924">
    <property type="entry name" value="Alkanal_monooxygenase"/>
</dbReference>
<dbReference type="InterPro" id="IPR050766">
    <property type="entry name" value="Bact_Lucif_Oxidored"/>
</dbReference>
<dbReference type="InterPro" id="IPR018235">
    <property type="entry name" value="Bacterial_luciferase_CS"/>
</dbReference>
<dbReference type="InterPro" id="IPR011251">
    <property type="entry name" value="Luciferase-like_dom"/>
</dbReference>
<dbReference type="InterPro" id="IPR036661">
    <property type="entry name" value="Luciferase-like_sf"/>
</dbReference>
<dbReference type="InterPro" id="IPR002103">
    <property type="entry name" value="Luciferase_bac/NFP"/>
</dbReference>
<dbReference type="PANTHER" id="PTHR30137:SF8">
    <property type="entry name" value="BLR5498 PROTEIN"/>
    <property type="match status" value="1"/>
</dbReference>
<dbReference type="PANTHER" id="PTHR30137">
    <property type="entry name" value="LUCIFERASE-LIKE MONOOXYGENASE"/>
    <property type="match status" value="1"/>
</dbReference>
<dbReference type="Pfam" id="PF00296">
    <property type="entry name" value="Bac_luciferase"/>
    <property type="match status" value="1"/>
</dbReference>
<dbReference type="PRINTS" id="PR00089">
    <property type="entry name" value="LUCIFERASE"/>
</dbReference>
<dbReference type="SUPFAM" id="SSF51679">
    <property type="entry name" value="Bacterial luciferase-like"/>
    <property type="match status" value="1"/>
</dbReference>
<dbReference type="PROSITE" id="PS00494">
    <property type="entry name" value="BACTERIAL_LUCIFERASE"/>
    <property type="match status" value="1"/>
</dbReference>
<protein>
    <recommendedName>
        <fullName>Alkanal monooxygenase alpha chain</fullName>
        <ecNumber evidence="2">1.14.14.3</ecNumber>
    </recommendedName>
    <alternativeName>
        <fullName>Bacterial luciferase alpha chain</fullName>
    </alternativeName>
</protein>
<sequence length="354" mass="40343">MKFGNICFSYQPPGETHKLSNGSLCSAWYRLRRVGFDTYWTLEHHFTEFGLTGNLFVAAANLLGRTKTLNVGTMGVVIPTAHPVRQLEDVLLLDQMSKGRFNFGTVRGLYHKDFRVFGVDMEESRAITQNFYQMIMESLQTGTISSDSDYIQFPKVDVYPKVYSKNVPTCMTAESASTTEWLAIQGLPMVLSWIIGTNEKKAQMELYNEIATEYGHDISKIDHCMTYICSVDDDAQKAQDVCREFLKNWYDSYVNATNIFNDSNQTRGYDYHKGQWRDFVLQGHTNTNRRVDYSNGINPVGTPEQCIEIIQRDIDATGITNITCGFEANGTEDEIIASMRRFMTQVAPFLKEPK</sequence>
<gene>
    <name type="primary">luxA</name>
</gene>
<evidence type="ECO:0000250" key="1">
    <source>
        <dbReference type="UniProtKB" id="P07740"/>
    </source>
</evidence>
<evidence type="ECO:0000250" key="2">
    <source>
        <dbReference type="UniProtKB" id="P24113"/>
    </source>
</evidence>
<evidence type="ECO:0000305" key="3"/>
<name>LUXA_ALIFS</name>
<reference key="1">
    <citation type="journal article" date="1988" name="Nucleic Acids Res.">
        <title>Nucleotide sequence of the LuxA and LuxB genes of the bioluminescent marine bacterium Vibrio fischeri.</title>
        <authorList>
            <person name="Foran D.R."/>
            <person name="Brown W.M."/>
        </authorList>
    </citation>
    <scope>NUCLEOTIDE SEQUENCE [GENOMIC DNA]</scope>
    <source>
        <strain>MJ-1</strain>
    </source>
</reference>
<proteinExistence type="inferred from homology"/>
<accession>P19907</accession>